<evidence type="ECO:0000255" key="1">
    <source>
        <dbReference type="HAMAP-Rule" id="MF_00750"/>
    </source>
</evidence>
<dbReference type="EC" id="1.1.99.1" evidence="1"/>
<dbReference type="EC" id="1.2.1.8" evidence="1"/>
<dbReference type="EMBL" id="AP008934">
    <property type="protein sequence ID" value="BAE17341.1"/>
    <property type="molecule type" value="Genomic_DNA"/>
</dbReference>
<dbReference type="RefSeq" id="WP_002482148.1">
    <property type="nucleotide sequence ID" value="NZ_MTGA01000037.1"/>
</dbReference>
<dbReference type="SMR" id="Q4A0Q1"/>
<dbReference type="GeneID" id="3615110"/>
<dbReference type="KEGG" id="ssp:SSP0196"/>
<dbReference type="PATRIC" id="fig|342451.11.peg.202"/>
<dbReference type="eggNOG" id="COG2303">
    <property type="taxonomic scope" value="Bacteria"/>
</dbReference>
<dbReference type="HOGENOM" id="CLU_002865_7_1_9"/>
<dbReference type="OrthoDB" id="9785276at2"/>
<dbReference type="UniPathway" id="UPA00529">
    <property type="reaction ID" value="UER00385"/>
</dbReference>
<dbReference type="Proteomes" id="UP000006371">
    <property type="component" value="Chromosome"/>
</dbReference>
<dbReference type="GO" id="GO:0016020">
    <property type="term" value="C:membrane"/>
    <property type="evidence" value="ECO:0007669"/>
    <property type="project" value="TreeGrafter"/>
</dbReference>
<dbReference type="GO" id="GO:0008802">
    <property type="term" value="F:betaine-aldehyde dehydrogenase (NAD+) activity"/>
    <property type="evidence" value="ECO:0007669"/>
    <property type="project" value="UniProtKB-EC"/>
</dbReference>
<dbReference type="GO" id="GO:0008812">
    <property type="term" value="F:choline dehydrogenase activity"/>
    <property type="evidence" value="ECO:0007669"/>
    <property type="project" value="UniProtKB-UniRule"/>
</dbReference>
<dbReference type="GO" id="GO:0050660">
    <property type="term" value="F:flavin adenine dinucleotide binding"/>
    <property type="evidence" value="ECO:0007669"/>
    <property type="project" value="InterPro"/>
</dbReference>
<dbReference type="GO" id="GO:0019285">
    <property type="term" value="P:glycine betaine biosynthetic process from choline"/>
    <property type="evidence" value="ECO:0007669"/>
    <property type="project" value="UniProtKB-UniRule"/>
</dbReference>
<dbReference type="Gene3D" id="3.30.410.40">
    <property type="match status" value="1"/>
</dbReference>
<dbReference type="Gene3D" id="3.50.50.60">
    <property type="entry name" value="FAD/NAD(P)-binding domain"/>
    <property type="match status" value="1"/>
</dbReference>
<dbReference type="HAMAP" id="MF_00750">
    <property type="entry name" value="Choline_dehydrogen"/>
    <property type="match status" value="1"/>
</dbReference>
<dbReference type="InterPro" id="IPR011533">
    <property type="entry name" value="BetA"/>
</dbReference>
<dbReference type="InterPro" id="IPR036188">
    <property type="entry name" value="FAD/NAD-bd_sf"/>
</dbReference>
<dbReference type="InterPro" id="IPR012132">
    <property type="entry name" value="GMC_OxRdtase"/>
</dbReference>
<dbReference type="InterPro" id="IPR000172">
    <property type="entry name" value="GMC_OxRdtase_N"/>
</dbReference>
<dbReference type="InterPro" id="IPR007867">
    <property type="entry name" value="GMC_OxRtase_C"/>
</dbReference>
<dbReference type="NCBIfam" id="TIGR01810">
    <property type="entry name" value="betA"/>
    <property type="match status" value="1"/>
</dbReference>
<dbReference type="NCBIfam" id="NF002550">
    <property type="entry name" value="PRK02106.1"/>
    <property type="match status" value="1"/>
</dbReference>
<dbReference type="PANTHER" id="PTHR11552:SF147">
    <property type="entry name" value="CHOLINE DEHYDROGENASE, MITOCHONDRIAL"/>
    <property type="match status" value="1"/>
</dbReference>
<dbReference type="PANTHER" id="PTHR11552">
    <property type="entry name" value="GLUCOSE-METHANOL-CHOLINE GMC OXIDOREDUCTASE"/>
    <property type="match status" value="1"/>
</dbReference>
<dbReference type="Pfam" id="PF05199">
    <property type="entry name" value="GMC_oxred_C"/>
    <property type="match status" value="1"/>
</dbReference>
<dbReference type="Pfam" id="PF00732">
    <property type="entry name" value="GMC_oxred_N"/>
    <property type="match status" value="1"/>
</dbReference>
<dbReference type="PIRSF" id="PIRSF000137">
    <property type="entry name" value="Alcohol_oxidase"/>
    <property type="match status" value="1"/>
</dbReference>
<dbReference type="SUPFAM" id="SSF54373">
    <property type="entry name" value="FAD-linked reductases, C-terminal domain"/>
    <property type="match status" value="1"/>
</dbReference>
<dbReference type="SUPFAM" id="SSF51905">
    <property type="entry name" value="FAD/NAD(P)-binding domain"/>
    <property type="match status" value="1"/>
</dbReference>
<dbReference type="PROSITE" id="PS00623">
    <property type="entry name" value="GMC_OXRED_1"/>
    <property type="match status" value="1"/>
</dbReference>
<dbReference type="PROSITE" id="PS00624">
    <property type="entry name" value="GMC_OXRED_2"/>
    <property type="match status" value="1"/>
</dbReference>
<name>BETA_STAS1</name>
<protein>
    <recommendedName>
        <fullName evidence="1">Oxygen-dependent choline dehydrogenase</fullName>
        <shortName evidence="1">CDH</shortName>
        <shortName evidence="1">CHD</shortName>
        <ecNumber evidence="1">1.1.99.1</ecNumber>
    </recommendedName>
    <alternativeName>
        <fullName evidence="1">Betaine aldehyde dehydrogenase</fullName>
        <shortName evidence="1">BADH</shortName>
        <ecNumber evidence="1">1.2.1.8</ecNumber>
    </alternativeName>
</protein>
<gene>
    <name evidence="1" type="primary">betA</name>
    <name type="ordered locus">SSP0196</name>
</gene>
<comment type="function">
    <text evidence="1">Involved in the biosynthesis of the osmoprotectant glycine betaine. Catalyzes the oxidation of choline to betaine aldehyde and betaine aldehyde to glycine betaine at the same rate.</text>
</comment>
<comment type="catalytic activity">
    <reaction evidence="1">
        <text>choline + A = betaine aldehyde + AH2</text>
        <dbReference type="Rhea" id="RHEA:17433"/>
        <dbReference type="ChEBI" id="CHEBI:13193"/>
        <dbReference type="ChEBI" id="CHEBI:15354"/>
        <dbReference type="ChEBI" id="CHEBI:15710"/>
        <dbReference type="ChEBI" id="CHEBI:17499"/>
        <dbReference type="EC" id="1.1.99.1"/>
    </reaction>
</comment>
<comment type="catalytic activity">
    <reaction evidence="1">
        <text>betaine aldehyde + NAD(+) + H2O = glycine betaine + NADH + 2 H(+)</text>
        <dbReference type="Rhea" id="RHEA:15305"/>
        <dbReference type="ChEBI" id="CHEBI:15377"/>
        <dbReference type="ChEBI" id="CHEBI:15378"/>
        <dbReference type="ChEBI" id="CHEBI:15710"/>
        <dbReference type="ChEBI" id="CHEBI:17750"/>
        <dbReference type="ChEBI" id="CHEBI:57540"/>
        <dbReference type="ChEBI" id="CHEBI:57945"/>
        <dbReference type="EC" id="1.2.1.8"/>
    </reaction>
</comment>
<comment type="cofactor">
    <cofactor evidence="1">
        <name>FAD</name>
        <dbReference type="ChEBI" id="CHEBI:57692"/>
    </cofactor>
</comment>
<comment type="pathway">
    <text evidence="1">Amine and polyamine biosynthesis; betaine biosynthesis via choline pathway; betaine aldehyde from choline (cytochrome c reductase route): step 1/1.</text>
</comment>
<comment type="similarity">
    <text evidence="1">Belongs to the GMC oxidoreductase family.</text>
</comment>
<sequence>MKQSYDYIIIGGGSAGSVLGSRISEDVSNNVLVLEAGRSDYPWDLLIQMPAALMYPAGNKLYDWIYETTPEPHMDGRKVGHARGKVLGGSSSINGMIYQRGNPMDYEKWAKPEGMDSWDYAHCLPYFKRLEKTFGATKDDQFRGHHGPIKLRRGPADNPLFQAFFDAGVEAGYNKTPDVNGFRQEGFGPFDSQVHNGRRVSASRAYLHPAMKRKNLEVQTRAFVTKLNFEGNKVTGVTFKKNGREHTVNAKEVILSGGAINSPQLLQLSGIGDSEHLRSLGIEPRIHLPGVGENFEDHLEVYVQHACKEPVSMQPSLNKLKMPFIGLQWIFGRKGAAASNHFEGGGFVRSNEDVDYPNLMFHFLPIAVRYDGTKAPAAHGYQVHVGPMYSNSRGHLKIKSKDPFVKPDFVFNYLSTEEDKREWVEAIKVARNILGQKALDPYNGGEISPGPEVQTDEEIIEWVKRDGETALHPSCSCRMGPASDEMSVVDPETFKVHGMENLRVVDASVMPRTTNGNIHSPVLMMAEKAADIIRGKKPLDPEYIDFYRHGVHDKDAGTIK</sequence>
<reference key="1">
    <citation type="journal article" date="2005" name="Proc. Natl. Acad. Sci. U.S.A.">
        <title>Whole genome sequence of Staphylococcus saprophyticus reveals the pathogenesis of uncomplicated urinary tract infection.</title>
        <authorList>
            <person name="Kuroda M."/>
            <person name="Yamashita A."/>
            <person name="Hirakawa H."/>
            <person name="Kumano M."/>
            <person name="Morikawa K."/>
            <person name="Higashide M."/>
            <person name="Maruyama A."/>
            <person name="Inose Y."/>
            <person name="Matoba K."/>
            <person name="Toh H."/>
            <person name="Kuhara S."/>
            <person name="Hattori M."/>
            <person name="Ohta T."/>
        </authorList>
    </citation>
    <scope>NUCLEOTIDE SEQUENCE [LARGE SCALE GENOMIC DNA]</scope>
    <source>
        <strain>ATCC 15305 / DSM 20229 / NCIMB 8711 / NCTC 7292 / S-41</strain>
    </source>
</reference>
<accession>Q4A0Q1</accession>
<feature type="chain" id="PRO_0000205604" description="Oxygen-dependent choline dehydrogenase">
    <location>
        <begin position="1"/>
        <end position="560"/>
    </location>
</feature>
<feature type="active site" description="Proton acceptor" evidence="1">
    <location>
        <position position="472"/>
    </location>
</feature>
<feature type="binding site" evidence="1">
    <location>
        <begin position="6"/>
        <end position="35"/>
    </location>
    <ligand>
        <name>FAD</name>
        <dbReference type="ChEBI" id="CHEBI:57692"/>
    </ligand>
</feature>
<keyword id="KW-0274">FAD</keyword>
<keyword id="KW-0285">Flavoprotein</keyword>
<keyword id="KW-0520">NAD</keyword>
<keyword id="KW-0560">Oxidoreductase</keyword>
<keyword id="KW-1185">Reference proteome</keyword>
<organism>
    <name type="scientific">Staphylococcus saprophyticus subsp. saprophyticus (strain ATCC 15305 / DSM 20229 / NCIMB 8711 / NCTC 7292 / S-41)</name>
    <dbReference type="NCBI Taxonomy" id="342451"/>
    <lineage>
        <taxon>Bacteria</taxon>
        <taxon>Bacillati</taxon>
        <taxon>Bacillota</taxon>
        <taxon>Bacilli</taxon>
        <taxon>Bacillales</taxon>
        <taxon>Staphylococcaceae</taxon>
        <taxon>Staphylococcus</taxon>
    </lineage>
</organism>
<proteinExistence type="inferred from homology"/>